<dbReference type="EC" id="2.7.1.8"/>
<dbReference type="EMBL" id="AE003852">
    <property type="protein sequence ID" value="AAF93780.1"/>
    <property type="status" value="ALT_INIT"/>
    <property type="molecule type" value="Genomic_DNA"/>
</dbReference>
<dbReference type="PIR" id="B82301">
    <property type="entry name" value="B82301"/>
</dbReference>
<dbReference type="RefSeq" id="NP_230263.1">
    <property type="nucleotide sequence ID" value="NC_002505.1"/>
</dbReference>
<dbReference type="RefSeq" id="WP_001110418.1">
    <property type="nucleotide sequence ID" value="NZ_LT906614.1"/>
</dbReference>
<dbReference type="SMR" id="Q9KUA9"/>
<dbReference type="STRING" id="243277.VC_0614"/>
<dbReference type="DNASU" id="2615402"/>
<dbReference type="EnsemblBacteria" id="AAF93780">
    <property type="protein sequence ID" value="AAF93780"/>
    <property type="gene ID" value="VC_0614"/>
</dbReference>
<dbReference type="KEGG" id="vch:VC_0614"/>
<dbReference type="PATRIC" id="fig|243277.26.peg.585"/>
<dbReference type="eggNOG" id="COG2971">
    <property type="taxonomic scope" value="Bacteria"/>
</dbReference>
<dbReference type="HOGENOM" id="CLU_016274_2_0_6"/>
<dbReference type="BioCyc" id="MetaCyc:FY484_RS03245-MONOMER"/>
<dbReference type="Proteomes" id="UP000000584">
    <property type="component" value="Chromosome 1"/>
</dbReference>
<dbReference type="GO" id="GO:0005737">
    <property type="term" value="C:cytoplasm"/>
    <property type="evidence" value="ECO:0007669"/>
    <property type="project" value="UniProtKB-SubCell"/>
</dbReference>
<dbReference type="GO" id="GO:0005524">
    <property type="term" value="F:ATP binding"/>
    <property type="evidence" value="ECO:0007669"/>
    <property type="project" value="UniProtKB-KW"/>
</dbReference>
<dbReference type="GO" id="GO:0047931">
    <property type="term" value="F:glucosamine kinase activity"/>
    <property type="evidence" value="ECO:0000314"/>
    <property type="project" value="UniProtKB"/>
</dbReference>
<dbReference type="GO" id="GO:0016310">
    <property type="term" value="P:phosphorylation"/>
    <property type="evidence" value="ECO:0000314"/>
    <property type="project" value="UniProtKB"/>
</dbReference>
<dbReference type="CDD" id="cd24082">
    <property type="entry name" value="ASKHA_NBD_GspK-like"/>
    <property type="match status" value="1"/>
</dbReference>
<dbReference type="Gene3D" id="3.30.420.40">
    <property type="match status" value="2"/>
</dbReference>
<dbReference type="InterPro" id="IPR002731">
    <property type="entry name" value="ATPase_BadF"/>
</dbReference>
<dbReference type="InterPro" id="IPR043129">
    <property type="entry name" value="ATPase_NBD"/>
</dbReference>
<dbReference type="InterPro" id="IPR052519">
    <property type="entry name" value="Euk-type_GlcNAc_Kinase"/>
</dbReference>
<dbReference type="PANTHER" id="PTHR43190">
    <property type="entry name" value="N-ACETYL-D-GLUCOSAMINE KINASE"/>
    <property type="match status" value="1"/>
</dbReference>
<dbReference type="PANTHER" id="PTHR43190:SF3">
    <property type="entry name" value="N-ACETYL-D-GLUCOSAMINE KINASE"/>
    <property type="match status" value="1"/>
</dbReference>
<dbReference type="Pfam" id="PF01869">
    <property type="entry name" value="BcrAD_BadFG"/>
    <property type="match status" value="1"/>
</dbReference>
<dbReference type="SUPFAM" id="SSF53067">
    <property type="entry name" value="Actin-like ATPase domain"/>
    <property type="match status" value="2"/>
</dbReference>
<evidence type="ECO:0000250" key="1">
    <source>
        <dbReference type="UniProtKB" id="Q9UJ70"/>
    </source>
</evidence>
<evidence type="ECO:0000269" key="2">
    <source>
    </source>
</evidence>
<evidence type="ECO:0000305" key="3"/>
<reference key="1">
    <citation type="journal article" date="2000" name="Nature">
        <title>DNA sequence of both chromosomes of the cholera pathogen Vibrio cholerae.</title>
        <authorList>
            <person name="Heidelberg J.F."/>
            <person name="Eisen J.A."/>
            <person name="Nelson W.C."/>
            <person name="Clayton R.A."/>
            <person name="Gwinn M.L."/>
            <person name="Dodson R.J."/>
            <person name="Haft D.H."/>
            <person name="Hickey E.K."/>
            <person name="Peterson J.D."/>
            <person name="Umayam L.A."/>
            <person name="Gill S.R."/>
            <person name="Nelson K.E."/>
            <person name="Read T.D."/>
            <person name="Tettelin H."/>
            <person name="Richardson D.L."/>
            <person name="Ermolaeva M.D."/>
            <person name="Vamathevan J.J."/>
            <person name="Bass S."/>
            <person name="Qin H."/>
            <person name="Dragoi I."/>
            <person name="Sellers P."/>
            <person name="McDonald L.A."/>
            <person name="Utterback T.R."/>
            <person name="Fleischmann R.D."/>
            <person name="Nierman W.C."/>
            <person name="White O."/>
            <person name="Salzberg S.L."/>
            <person name="Smith H.O."/>
            <person name="Colwell R.R."/>
            <person name="Mekalanos J.J."/>
            <person name="Venter J.C."/>
            <person name="Fraser C.M."/>
        </authorList>
    </citation>
    <scope>NUCLEOTIDE SEQUENCE [LARGE SCALE GENOMIC DNA]</scope>
    <source>
        <strain>ATCC 39315 / El Tor Inaba N16961</strain>
    </source>
</reference>
<reference key="2">
    <citation type="journal article" date="2002" name="J. Biol. Chem.">
        <title>Isolation of a glucosamine-specific kinase, a unique enzyme of Vibrio cholerae.</title>
        <authorList>
            <person name="Park J.K."/>
            <person name="Wang L.X."/>
            <person name="Roseman S."/>
        </authorList>
    </citation>
    <scope>PROTEIN SEQUENCE OF 1-12</scope>
    <scope>FUNCTION</scope>
    <scope>CATALYTIC ACTIVITY</scope>
    <scope>BIOPHYSICOCHEMICAL PROPERTIES</scope>
    <scope>SUBCELLULAR LOCATION</scope>
    <scope>GENE NAME</scope>
    <source>
        <strain>ATCC 39315 / El Tor Inaba N16961</strain>
    </source>
</reference>
<protein>
    <recommendedName>
        <fullName>Glucosamine kinase GspK</fullName>
        <ecNumber>2.7.1.8</ecNumber>
    </recommendedName>
    <alternativeName>
        <fullName>GlcN kinase</fullName>
    </alternativeName>
</protein>
<gene>
    <name type="primary">gspK</name>
    <name type="ordered locus">VC_0614</name>
</gene>
<accession>Q9KUA9</accession>
<sequence>MNYYVGIDGGGTSCRARIRNQQGEWVGEAKSGSANIMLGVEVALRSVVDAITQAAEQGGLSPDDFPSMHVGLALAGAEQKEAWHAFMQQAHPFASITLNTDAYGACLGAHLGEEGAIMIAGTGSCGILLKGGKQYVVGGREFPISDQGSGAVMGLRLIQQVLLAQDGIRPHTPLCDVVMNHFNHDIDSIVAWSKTALPRDYGQFSPQIFSHAYCGDPLAIELLKQTAADIEMFLIALHHKGAERICLMGSIAERIQDWLSPPVQQWIVKPQSDAIEGALMFAGKPEHNLYKDGL</sequence>
<proteinExistence type="evidence at protein level"/>
<comment type="function">
    <text evidence="2">ATP-dependent kinase, which is specific for glucosamine. Does not show kinase activity with any other sugar.</text>
</comment>
<comment type="catalytic activity">
    <reaction evidence="2">
        <text>D-glucosamine + ATP = D-glucosamine 6-phosphate + ADP + H(+)</text>
        <dbReference type="Rhea" id="RHEA:10948"/>
        <dbReference type="ChEBI" id="CHEBI:15378"/>
        <dbReference type="ChEBI" id="CHEBI:30616"/>
        <dbReference type="ChEBI" id="CHEBI:58723"/>
        <dbReference type="ChEBI" id="CHEBI:58725"/>
        <dbReference type="ChEBI" id="CHEBI:456216"/>
        <dbReference type="EC" id="2.7.1.8"/>
    </reaction>
</comment>
<comment type="biophysicochemical properties">
    <kinetics>
        <KM evidence="2">0.48 mM for glucosamine</KM>
        <KM evidence="2">1.96 mM for ATP</KM>
    </kinetics>
    <phDependence>
        <text evidence="2">Optimum pH is 7.5-8.5.</text>
    </phDependence>
    <temperatureDependence>
        <text evidence="2">Optimum temperature is 40-42 degrees Celsius.</text>
    </temperatureDependence>
</comment>
<comment type="subcellular location">
    <subcellularLocation>
        <location evidence="2">Cytoplasm</location>
    </subcellularLocation>
</comment>
<comment type="similarity">
    <text evidence="3">Belongs to the eukaryotic-type N-acetylglucosamine kinase family.</text>
</comment>
<comment type="sequence caution" evidence="3">
    <conflict type="erroneous initiation">
        <sequence resource="EMBL-CDS" id="AAF93780"/>
    </conflict>
    <text>Extended N-terminus.</text>
</comment>
<organism>
    <name type="scientific">Vibrio cholerae serotype O1 (strain ATCC 39315 / El Tor Inaba N16961)</name>
    <dbReference type="NCBI Taxonomy" id="243277"/>
    <lineage>
        <taxon>Bacteria</taxon>
        <taxon>Pseudomonadati</taxon>
        <taxon>Pseudomonadota</taxon>
        <taxon>Gammaproteobacteria</taxon>
        <taxon>Vibrionales</taxon>
        <taxon>Vibrionaceae</taxon>
        <taxon>Vibrio</taxon>
    </lineage>
</organism>
<feature type="chain" id="PRO_0000418396" description="Glucosamine kinase GspK">
    <location>
        <begin position="1"/>
        <end position="294"/>
    </location>
</feature>
<feature type="binding site" evidence="1">
    <location>
        <position position="12"/>
    </location>
    <ligand>
        <name>ATP</name>
        <dbReference type="ChEBI" id="CHEBI:30616"/>
    </ligand>
</feature>
<feature type="binding site" evidence="1">
    <location>
        <position position="101"/>
    </location>
    <ligand>
        <name>substrate</name>
    </ligand>
</feature>
<feature type="binding site" evidence="1">
    <location>
        <position position="122"/>
    </location>
    <ligand>
        <name>ATP</name>
        <dbReference type="ChEBI" id="CHEBI:30616"/>
    </ligand>
</feature>
<feature type="binding site" evidence="1">
    <location>
        <begin position="139"/>
        <end position="141"/>
    </location>
    <ligand>
        <name>substrate</name>
    </ligand>
</feature>
<feature type="binding site" evidence="1">
    <location>
        <position position="146"/>
    </location>
    <ligand>
        <name>substrate</name>
    </ligand>
</feature>
<feature type="binding site" evidence="1">
    <location>
        <position position="202"/>
    </location>
    <ligand>
        <name>ATP</name>
        <dbReference type="ChEBI" id="CHEBI:30616"/>
    </ligand>
</feature>
<name>GSPK_VIBCH</name>
<keyword id="KW-0067">ATP-binding</keyword>
<keyword id="KW-0963">Cytoplasm</keyword>
<keyword id="KW-0903">Direct protein sequencing</keyword>
<keyword id="KW-0418">Kinase</keyword>
<keyword id="KW-0547">Nucleotide-binding</keyword>
<keyword id="KW-1185">Reference proteome</keyword>
<keyword id="KW-0808">Transferase</keyword>